<evidence type="ECO:0000250" key="1">
    <source>
        <dbReference type="UniProtKB" id="H1ZZB0"/>
    </source>
</evidence>
<evidence type="ECO:0000269" key="2">
    <source>
    </source>
</evidence>
<evidence type="ECO:0000303" key="3">
    <source>
    </source>
</evidence>
<evidence type="ECO:0000305" key="4"/>
<evidence type="ECO:0000305" key="5">
    <source>
    </source>
</evidence>
<evidence type="ECO:0000312" key="6">
    <source>
        <dbReference type="EMBL" id="QVI29554.1"/>
    </source>
</evidence>
<reference key="1">
    <citation type="journal article" date="2022" name="Cell Host Microbe">
        <title>3beta-Hydroxysteroid dehydrogenase expressed by gut microbes degrades testosterone and is linked to depression in males.</title>
        <authorList>
            <person name="Li D."/>
            <person name="Liu R."/>
            <person name="Wang M."/>
            <person name="Peng R."/>
            <person name="Fu S."/>
            <person name="Fu A."/>
            <person name="Le J."/>
            <person name="Yao Q."/>
            <person name="Yuan T."/>
            <person name="Chi H."/>
            <person name="Mu X."/>
            <person name="Sun T."/>
            <person name="Liu H."/>
            <person name="Yan P."/>
            <person name="Wang S."/>
            <person name="Cheng S."/>
            <person name="Deng Z."/>
            <person name="Liu Z."/>
            <person name="Wang G."/>
            <person name="Li Y."/>
            <person name="Liu T."/>
        </authorList>
    </citation>
    <scope>NUCLEOTIDE SEQUENCE [LARGE SCALE GENOMIC DNA]</scope>
    <scope>FUNCTION</scope>
    <scope>POTENTIAL ROLE IN MICROBIOTA</scope>
    <scope>CATALYTIC ACTIVITY</scope>
    <scope>BIOPHYSICOCHEMICAL PROPERTIES</scope>
    <source>
        <strain>MN2019</strain>
    </source>
</reference>
<name>3BHD_MYCNE</name>
<accession>P0DX24</accession>
<protein>
    <recommendedName>
        <fullName evidence="3">3-beta-hydroxysteroid dehydrogenase</fullName>
        <shortName evidence="3">3beta-HSD</shortName>
        <ecNumber evidence="2">1.1.1.51</ecNumber>
    </recommendedName>
</protein>
<keyword id="KW-0443">Lipid metabolism</keyword>
<keyword id="KW-0520">NAD</keyword>
<keyword id="KW-0521">NADP</keyword>
<keyword id="KW-0560">Oxidoreductase</keyword>
<organism>
    <name type="scientific">Mycolicibacterium neoaurum</name>
    <name type="common">Mycobacterium neoaurum</name>
    <dbReference type="NCBI Taxonomy" id="1795"/>
    <lineage>
        <taxon>Bacteria</taxon>
        <taxon>Bacillati</taxon>
        <taxon>Actinomycetota</taxon>
        <taxon>Actinomycetes</taxon>
        <taxon>Mycobacteriales</taxon>
        <taxon>Mycobacteriaceae</taxon>
        <taxon>Mycolicibacterium</taxon>
    </lineage>
</organism>
<dbReference type="EC" id="1.1.1.51" evidence="2"/>
<dbReference type="EMBL" id="CP074376">
    <property type="protein sequence ID" value="QVI29554.1"/>
    <property type="molecule type" value="Genomic_DNA"/>
</dbReference>
<dbReference type="RefSeq" id="WP_213449136.1">
    <property type="nucleotide sequence ID" value="NZ_CP074376.1"/>
</dbReference>
<dbReference type="SMR" id="P0DX24"/>
<dbReference type="GO" id="GO:0016616">
    <property type="term" value="F:oxidoreductase activity, acting on the CH-OH group of donors, NAD or NADP as acceptor"/>
    <property type="evidence" value="ECO:0007669"/>
    <property type="project" value="InterPro"/>
</dbReference>
<dbReference type="GO" id="GO:0006694">
    <property type="term" value="P:steroid biosynthetic process"/>
    <property type="evidence" value="ECO:0007669"/>
    <property type="project" value="InterPro"/>
</dbReference>
<dbReference type="CDD" id="cd05241">
    <property type="entry name" value="3b-HSD-like_SDR_e"/>
    <property type="match status" value="1"/>
</dbReference>
<dbReference type="Gene3D" id="3.40.50.720">
    <property type="entry name" value="NAD(P)-binding Rossmann-like Domain"/>
    <property type="match status" value="1"/>
</dbReference>
<dbReference type="InterPro" id="IPR002225">
    <property type="entry name" value="3Beta_OHSteriod_DH/Estase"/>
</dbReference>
<dbReference type="InterPro" id="IPR050177">
    <property type="entry name" value="Lipid_A_modif_metabolic_enz"/>
</dbReference>
<dbReference type="InterPro" id="IPR036291">
    <property type="entry name" value="NAD(P)-bd_dom_sf"/>
</dbReference>
<dbReference type="PANTHER" id="PTHR43245">
    <property type="entry name" value="BIFUNCTIONAL POLYMYXIN RESISTANCE PROTEIN ARNA"/>
    <property type="match status" value="1"/>
</dbReference>
<dbReference type="PANTHER" id="PTHR43245:SF51">
    <property type="entry name" value="SHORT CHAIN DEHYDROGENASE_REDUCTASE FAMILY 42E, MEMBER 2"/>
    <property type="match status" value="1"/>
</dbReference>
<dbReference type="Pfam" id="PF01073">
    <property type="entry name" value="3Beta_HSD"/>
    <property type="match status" value="1"/>
</dbReference>
<dbReference type="SUPFAM" id="SSF51735">
    <property type="entry name" value="NAD(P)-binding Rossmann-fold domains"/>
    <property type="match status" value="1"/>
</dbReference>
<feature type="chain" id="PRO_0000458458" description="3-beta-hydroxysteroid dehydrogenase">
    <location>
        <begin position="1"/>
        <end position="366"/>
    </location>
</feature>
<feature type="active site" description="Proton donor" evidence="1">
    <location>
        <position position="154"/>
    </location>
</feature>
<comment type="function">
    <text evidence="2">Catalyzes the degradation of testosterone into androstenedione.</text>
</comment>
<comment type="catalytic activity">
    <reaction evidence="2">
        <text>testosterone + NAD(+) = androst-4-ene-3,17-dione + NADH + H(+)</text>
        <dbReference type="Rhea" id="RHEA:14929"/>
        <dbReference type="ChEBI" id="CHEBI:15378"/>
        <dbReference type="ChEBI" id="CHEBI:16422"/>
        <dbReference type="ChEBI" id="CHEBI:17347"/>
        <dbReference type="ChEBI" id="CHEBI:57540"/>
        <dbReference type="ChEBI" id="CHEBI:57945"/>
        <dbReference type="EC" id="1.1.1.51"/>
    </reaction>
</comment>
<comment type="catalytic activity">
    <reaction evidence="5">
        <text>testosterone + NADP(+) = androst-4-ene-3,17-dione + NADPH + H(+)</text>
        <dbReference type="Rhea" id="RHEA:14981"/>
        <dbReference type="ChEBI" id="CHEBI:15378"/>
        <dbReference type="ChEBI" id="CHEBI:16422"/>
        <dbReference type="ChEBI" id="CHEBI:17347"/>
        <dbReference type="ChEBI" id="CHEBI:57783"/>
        <dbReference type="ChEBI" id="CHEBI:58349"/>
        <dbReference type="EC" id="1.1.1.51"/>
    </reaction>
</comment>
<comment type="biophysicochemical properties">
    <kinetics>
        <KM evidence="2">101.9 uM for testosterone</KM>
        <text evidence="2">kcat is 0.222 min(-1).</text>
    </kinetics>
</comment>
<comment type="miscellaneous">
    <text evidence="2">The degradation of testosterone by gut microbes containing 3beta-HSD leads to a decrease in serum and brain testosterone levels, causing depression-like behavior in male rats (PubMed:35108497). The prevalence of M.neoaurum and 3beta-HSD is higher in gut microbiota of patients with depression than in those without depression, suggesting a potential causal role for gut microbes in certain types of depression (PubMed:35108497).</text>
</comment>
<comment type="similarity">
    <text evidence="4">Belongs to the 3-beta-HSD family.</text>
</comment>
<sequence>MGDPTLRTDLGRVLVTGGSGFVGANLVTTLLERGHEVRSFDRVPSPLPAHPKLTTVVGDITNGEDVATAVAGIDTIFHTAAIIDLMGGATVTEEYRQRSFSVNVEGTKNLVHAGQQAGVQRFVYTASNSVVMGGQDIVNGDETLPYTTRFNDLYTETKVVAEKFVLGQNGEQGMLTCSIRPSGIWGRGDQTMFRKVFENVLAGHVKVLVGSKNIKLDNSYVHNLIHGFILAAEHLVPGGTAPGQAYFINDGEPLNMFEFARPVVVACGRKLPNIRVSGRLVHKAMMGWQWLHFKYGIREPLVEPLAVERLYLNNYFSIAKARRDLGYEPLFTTEQAMAECLPYYTDLFDTMVAQGAQPAVAAAPKS</sequence>
<proteinExistence type="evidence at protein level"/>
<gene>
    <name evidence="6" type="ORF">MN2019_09805</name>
</gene>